<feature type="chain" id="PRO_0000108440" description="Putative tetraheme cytochrome-c type">
    <location>
        <begin position="1"/>
        <end position="184"/>
    </location>
</feature>
<feature type="topological domain" description="Cytoplasmic" evidence="2">
    <location>
        <begin position="1"/>
        <end position="14"/>
    </location>
</feature>
<feature type="transmembrane region" description="Helical" evidence="2">
    <location>
        <begin position="15"/>
        <end position="35"/>
    </location>
</feature>
<feature type="topological domain" description="Periplasmic" evidence="2">
    <location>
        <begin position="36"/>
        <end position="184"/>
    </location>
</feature>
<feature type="binding site" description="covalent" evidence="1">
    <location>
        <position position="44"/>
    </location>
    <ligand>
        <name>heme</name>
        <dbReference type="ChEBI" id="CHEBI:30413"/>
        <label>1</label>
    </ligand>
</feature>
<feature type="binding site" description="covalent" evidence="1">
    <location>
        <position position="47"/>
    </location>
    <ligand>
        <name>heme</name>
        <dbReference type="ChEBI" id="CHEBI:30413"/>
        <label>1</label>
    </ligand>
</feature>
<feature type="binding site" description="axial binding residue" evidence="1">
    <location>
        <position position="50"/>
    </location>
    <ligand>
        <name>heme</name>
        <dbReference type="ChEBI" id="CHEBI:30413"/>
        <label>1</label>
    </ligand>
    <ligandPart>
        <name>Fe</name>
        <dbReference type="ChEBI" id="CHEBI:18248"/>
    </ligandPart>
</feature>
<feature type="binding site" description="covalent" evidence="1">
    <location>
        <position position="73"/>
    </location>
    <ligand>
        <name>heme</name>
        <dbReference type="ChEBI" id="CHEBI:30413"/>
        <label>2</label>
    </ligand>
</feature>
<feature type="binding site" description="covalent" evidence="1">
    <location>
        <position position="76"/>
    </location>
    <ligand>
        <name>heme</name>
        <dbReference type="ChEBI" id="CHEBI:30413"/>
        <label>2</label>
    </ligand>
</feature>
<feature type="binding site" description="axial binding residue" evidence="1">
    <location>
        <position position="77"/>
    </location>
    <ligand>
        <name>heme</name>
        <dbReference type="ChEBI" id="CHEBI:30413"/>
        <label>2</label>
    </ligand>
    <ligandPart>
        <name>Fe</name>
        <dbReference type="ChEBI" id="CHEBI:18248"/>
    </ligandPart>
</feature>
<feature type="binding site" evidence="1">
    <location>
        <position position="89"/>
    </location>
    <ligand>
        <name>substrate</name>
    </ligand>
</feature>
<feature type="binding site" description="axial binding residue" evidence="1">
    <location>
        <position position="95"/>
    </location>
    <ligand>
        <name>heme</name>
        <dbReference type="ChEBI" id="CHEBI:30413"/>
        <label>1</label>
    </ligand>
    <ligandPart>
        <name>Fe</name>
        <dbReference type="ChEBI" id="CHEBI:18248"/>
    </ligandPart>
</feature>
<feature type="binding site" evidence="1">
    <location>
        <position position="95"/>
    </location>
    <ligand>
        <name>substrate</name>
    </ligand>
</feature>
<feature type="binding site" description="covalent" evidence="1">
    <location>
        <position position="133"/>
    </location>
    <ligand>
        <name>heme</name>
        <dbReference type="ChEBI" id="CHEBI:30413"/>
        <label>3</label>
    </ligand>
</feature>
<feature type="binding site" description="covalent" evidence="1">
    <location>
        <position position="136"/>
    </location>
    <ligand>
        <name>heme</name>
        <dbReference type="ChEBI" id="CHEBI:30413"/>
        <label>3</label>
    </ligand>
</feature>
<feature type="binding site" description="axial binding residue" evidence="1">
    <location>
        <position position="137"/>
    </location>
    <ligand>
        <name>heme</name>
        <dbReference type="ChEBI" id="CHEBI:30413"/>
        <label>3</label>
    </ligand>
    <ligandPart>
        <name>Fe</name>
        <dbReference type="ChEBI" id="CHEBI:18248"/>
    </ligandPart>
</feature>
<feature type="binding site" description="covalent" evidence="1">
    <location>
        <position position="165"/>
    </location>
    <ligand>
        <name>heme</name>
        <dbReference type="ChEBI" id="CHEBI:30413"/>
        <label>4</label>
    </ligand>
</feature>
<feature type="binding site" description="covalent" evidence="1">
    <location>
        <position position="168"/>
    </location>
    <ligand>
        <name>heme</name>
        <dbReference type="ChEBI" id="CHEBI:30413"/>
        <label>4</label>
    </ligand>
</feature>
<feature type="binding site" description="axial binding residue" evidence="1">
    <location>
        <position position="169"/>
    </location>
    <ligand>
        <name>heme</name>
        <dbReference type="ChEBI" id="CHEBI:30413"/>
        <label>4</label>
    </ligand>
    <ligandPart>
        <name>Fe</name>
        <dbReference type="ChEBI" id="CHEBI:18248"/>
    </ligandPart>
</feature>
<feature type="binding site" description="axial binding residue" evidence="1">
    <location>
        <position position="174"/>
    </location>
    <ligand>
        <name>heme</name>
        <dbReference type="ChEBI" id="CHEBI:30413"/>
        <label>2</label>
    </ligand>
    <ligandPart>
        <name>Fe</name>
        <dbReference type="ChEBI" id="CHEBI:18248"/>
    </ligandPart>
</feature>
<feature type="sequence conflict" description="In Ref. 2; AAA23314." evidence="3" ref="2">
    <location>
        <position position="149"/>
    </location>
</feature>
<proteinExistence type="inferred from homology"/>
<organism>
    <name type="scientific">Allochromatium vinosum (strain ATCC 17899 / DSM 180 / NBRC 103801 / NCIMB 10441 / D)</name>
    <name type="common">Chromatium vinosum</name>
    <dbReference type="NCBI Taxonomy" id="572477"/>
    <lineage>
        <taxon>Bacteria</taxon>
        <taxon>Pseudomonadati</taxon>
        <taxon>Pseudomonadota</taxon>
        <taxon>Gammaproteobacteria</taxon>
        <taxon>Chromatiales</taxon>
        <taxon>Chromatiaceae</taxon>
        <taxon>Allochromatium</taxon>
    </lineage>
</organism>
<accession>Q06536</accession>
<accession>D3RRY0</accession>
<protein>
    <recommendedName>
        <fullName>Putative tetraheme cytochrome-c type</fullName>
    </recommendedName>
    <alternativeName>
        <fullName>ORF1</fullName>
    </alternativeName>
</protein>
<name>YFCC_ALLVD</name>
<gene>
    <name type="ordered locus">Alvin_1095</name>
</gene>
<sequence>MSKHAASSAKRFSLLALGLMFVGGIVFVWAVDFGIKTTNTLEFCTSCHTMQTNFEEYKESLHYKNTSGVQATCADCHVPKELGPKLVTKIVAAKDVYHEVMGTIDTPEKFEARRWYLANLVWKRLEASDSRECRSCHDYADMDLSEQSRSARSRHSAAQDKGQTCIECHKGVAHHEPTEPDDAS</sequence>
<reference key="1">
    <citation type="journal article" date="2011" name="Stand. Genomic Sci.">
        <title>Complete genome sequence of Allochromatium vinosum DSM 180(T).</title>
        <authorList>
            <person name="Weissgerber T."/>
            <person name="Zigann R."/>
            <person name="Bruce D."/>
            <person name="Chang Y.J."/>
            <person name="Detter J.C."/>
            <person name="Han C."/>
            <person name="Hauser L."/>
            <person name="Jeffries C.D."/>
            <person name="Land M."/>
            <person name="Munk A.C."/>
            <person name="Tapia R."/>
            <person name="Dahl C."/>
        </authorList>
    </citation>
    <scope>NUCLEOTIDE SEQUENCE [LARGE SCALE GENOMIC DNA]</scope>
    <source>
        <strain>ATCC 17899 / DSM 180 / NBRC 103801 / NCIMB 10441 / D</strain>
    </source>
</reference>
<reference key="2">
    <citation type="journal article" date="1993" name="J. Biol. Chem.">
        <title>Nucleotide sequence of the heme subunit of flavocytochrome c from the purple phototrophic bacterium, Chromatium vinosum. A 2.6-kilobase pair DNA fragment contains two multiheme cytochromes, a flavoprotein, and a homolog of human ankyrin.</title>
        <authorList>
            <person name="Dolata M.M."/>
            <person name="van Beeumen J.J."/>
            <person name="Ambler R.P."/>
            <person name="Meyer T.E."/>
            <person name="Cusanovich M.A."/>
        </authorList>
    </citation>
    <scope>NUCLEOTIDE SEQUENCE [GENOMIC DNA] OF 42-184</scope>
</reference>
<dbReference type="EMBL" id="CP001896">
    <property type="protein sequence ID" value="ADC62034.1"/>
    <property type="molecule type" value="Genomic_DNA"/>
</dbReference>
<dbReference type="EMBL" id="L13419">
    <property type="protein sequence ID" value="AAA23314.1"/>
    <property type="molecule type" value="Genomic_DNA"/>
</dbReference>
<dbReference type="PIR" id="A47169">
    <property type="entry name" value="A47169"/>
</dbReference>
<dbReference type="RefSeq" id="WP_012970310.1">
    <property type="nucleotide sequence ID" value="NC_013851.1"/>
</dbReference>
<dbReference type="STRING" id="572477.Alvin_1095"/>
<dbReference type="KEGG" id="alv:Alvin_1095"/>
<dbReference type="eggNOG" id="COG3005">
    <property type="taxonomic scope" value="Bacteria"/>
</dbReference>
<dbReference type="HOGENOM" id="CLU_096753_2_0_6"/>
<dbReference type="OrthoDB" id="9782159at2"/>
<dbReference type="Proteomes" id="UP000001441">
    <property type="component" value="Chromosome"/>
</dbReference>
<dbReference type="GO" id="GO:0005886">
    <property type="term" value="C:plasma membrane"/>
    <property type="evidence" value="ECO:0007669"/>
    <property type="project" value="UniProtKB-SubCell"/>
</dbReference>
<dbReference type="GO" id="GO:0009055">
    <property type="term" value="F:electron transfer activity"/>
    <property type="evidence" value="ECO:0007669"/>
    <property type="project" value="TreeGrafter"/>
</dbReference>
<dbReference type="GO" id="GO:0020037">
    <property type="term" value="F:heme binding"/>
    <property type="evidence" value="ECO:0007669"/>
    <property type="project" value="InterPro"/>
</dbReference>
<dbReference type="GO" id="GO:0046872">
    <property type="term" value="F:metal ion binding"/>
    <property type="evidence" value="ECO:0007669"/>
    <property type="project" value="UniProtKB-KW"/>
</dbReference>
<dbReference type="GO" id="GO:0009061">
    <property type="term" value="P:anaerobic respiration"/>
    <property type="evidence" value="ECO:0007669"/>
    <property type="project" value="TreeGrafter"/>
</dbReference>
<dbReference type="GO" id="GO:0019333">
    <property type="term" value="P:denitrification pathway"/>
    <property type="evidence" value="ECO:0007669"/>
    <property type="project" value="InterPro"/>
</dbReference>
<dbReference type="FunFam" id="1.10.3820.10:FF:000001">
    <property type="entry name" value="Cytochrome c-type protein"/>
    <property type="match status" value="1"/>
</dbReference>
<dbReference type="Gene3D" id="1.10.3820.10">
    <property type="entry name" value="Di-heme elbow motif domain"/>
    <property type="match status" value="1"/>
</dbReference>
<dbReference type="InterPro" id="IPR051174">
    <property type="entry name" value="Cytochrome_c-type_ET"/>
</dbReference>
<dbReference type="InterPro" id="IPR036280">
    <property type="entry name" value="Multihaem_cyt_sf"/>
</dbReference>
<dbReference type="InterPro" id="IPR024717">
    <property type="entry name" value="NapC/NirT/NrfH"/>
</dbReference>
<dbReference type="InterPro" id="IPR005126">
    <property type="entry name" value="NapC/NirT_cyt_c_N"/>
</dbReference>
<dbReference type="InterPro" id="IPR038266">
    <property type="entry name" value="NapC/NirT_cytc_sf"/>
</dbReference>
<dbReference type="PANTHER" id="PTHR30333">
    <property type="entry name" value="CYTOCHROME C-TYPE PROTEIN"/>
    <property type="match status" value="1"/>
</dbReference>
<dbReference type="PANTHER" id="PTHR30333:SF3">
    <property type="entry name" value="CYTOCHROME C-TYPE PROTEIN TORY"/>
    <property type="match status" value="1"/>
</dbReference>
<dbReference type="Pfam" id="PF03264">
    <property type="entry name" value="Cytochrom_NNT"/>
    <property type="match status" value="1"/>
</dbReference>
<dbReference type="PIRSF" id="PIRSF000013">
    <property type="entry name" value="4_hem_cytochrm_NapC"/>
    <property type="match status" value="1"/>
</dbReference>
<dbReference type="SUPFAM" id="SSF48695">
    <property type="entry name" value="Multiheme cytochromes"/>
    <property type="match status" value="1"/>
</dbReference>
<dbReference type="PROSITE" id="PS51008">
    <property type="entry name" value="MULTIHEME_CYTC"/>
    <property type="match status" value="1"/>
</dbReference>
<comment type="subcellular location">
    <subcellularLocation>
        <location evidence="3">Cell inner membrane</location>
        <topology evidence="3">Single-pass membrane protein</topology>
    </subcellularLocation>
</comment>
<comment type="PTM">
    <text evidence="3">Binds 4 heme groups per subunit.</text>
</comment>
<comment type="similarity">
    <text evidence="3">Belongs to the NapC/NirT/NrfH family.</text>
</comment>
<keyword id="KW-0997">Cell inner membrane</keyword>
<keyword id="KW-1003">Cell membrane</keyword>
<keyword id="KW-0249">Electron transport</keyword>
<keyword id="KW-0349">Heme</keyword>
<keyword id="KW-0408">Iron</keyword>
<keyword id="KW-0472">Membrane</keyword>
<keyword id="KW-0479">Metal-binding</keyword>
<keyword id="KW-1185">Reference proteome</keyword>
<keyword id="KW-0812">Transmembrane</keyword>
<keyword id="KW-1133">Transmembrane helix</keyword>
<keyword id="KW-0813">Transport</keyword>
<evidence type="ECO:0000250" key="1">
    <source>
        <dbReference type="UniProtKB" id="Q72EF4"/>
    </source>
</evidence>
<evidence type="ECO:0000255" key="2"/>
<evidence type="ECO:0000305" key="3"/>